<accession>Q7N0J8</accession>
<gene>
    <name evidence="1" type="primary">xseB</name>
    <name type="ordered locus">plu3885</name>
</gene>
<sequence length="92" mass="10214">MPKKNAISESTNSTPETAPAMTFESSLKELEQIVARLESGELALEEALSKFERGIQLARQGQQTLQQAEQRVQILLNDDTQSPLSHFSPDTE</sequence>
<reference key="1">
    <citation type="journal article" date="2003" name="Nat. Biotechnol.">
        <title>The genome sequence of the entomopathogenic bacterium Photorhabdus luminescens.</title>
        <authorList>
            <person name="Duchaud E."/>
            <person name="Rusniok C."/>
            <person name="Frangeul L."/>
            <person name="Buchrieser C."/>
            <person name="Givaudan A."/>
            <person name="Taourit S."/>
            <person name="Bocs S."/>
            <person name="Boursaux-Eude C."/>
            <person name="Chandler M."/>
            <person name="Charles J.-F."/>
            <person name="Dassa E."/>
            <person name="Derose R."/>
            <person name="Derzelle S."/>
            <person name="Freyssinet G."/>
            <person name="Gaudriault S."/>
            <person name="Medigue C."/>
            <person name="Lanois A."/>
            <person name="Powell K."/>
            <person name="Siguier P."/>
            <person name="Vincent R."/>
            <person name="Wingate V."/>
            <person name="Zouine M."/>
            <person name="Glaser P."/>
            <person name="Boemare N."/>
            <person name="Danchin A."/>
            <person name="Kunst F."/>
        </authorList>
    </citation>
    <scope>NUCLEOTIDE SEQUENCE [LARGE SCALE GENOMIC DNA]</scope>
    <source>
        <strain>DSM 15139 / CIP 105565 / TT01</strain>
    </source>
</reference>
<protein>
    <recommendedName>
        <fullName evidence="1">Exodeoxyribonuclease 7 small subunit</fullName>
        <ecNumber evidence="1">3.1.11.6</ecNumber>
    </recommendedName>
    <alternativeName>
        <fullName evidence="1">Exodeoxyribonuclease VII small subunit</fullName>
        <shortName evidence="1">Exonuclease VII small subunit</shortName>
    </alternativeName>
</protein>
<organism>
    <name type="scientific">Photorhabdus laumondii subsp. laumondii (strain DSM 15139 / CIP 105565 / TT01)</name>
    <name type="common">Photorhabdus luminescens subsp. laumondii</name>
    <dbReference type="NCBI Taxonomy" id="243265"/>
    <lineage>
        <taxon>Bacteria</taxon>
        <taxon>Pseudomonadati</taxon>
        <taxon>Pseudomonadota</taxon>
        <taxon>Gammaproteobacteria</taxon>
        <taxon>Enterobacterales</taxon>
        <taxon>Morganellaceae</taxon>
        <taxon>Photorhabdus</taxon>
    </lineage>
</organism>
<comment type="function">
    <text evidence="1">Bidirectionally degrades single-stranded DNA into large acid-insoluble oligonucleotides, which are then degraded further into small acid-soluble oligonucleotides.</text>
</comment>
<comment type="catalytic activity">
    <reaction evidence="1">
        <text>Exonucleolytic cleavage in either 5'- to 3'- or 3'- to 5'-direction to yield nucleoside 5'-phosphates.</text>
        <dbReference type="EC" id="3.1.11.6"/>
    </reaction>
</comment>
<comment type="subunit">
    <text evidence="1">Heterooligomer composed of large and small subunits.</text>
</comment>
<comment type="subcellular location">
    <subcellularLocation>
        <location evidence="1">Cytoplasm</location>
    </subcellularLocation>
</comment>
<comment type="similarity">
    <text evidence="1">Belongs to the XseB family.</text>
</comment>
<feature type="chain" id="PRO_0000206985" description="Exodeoxyribonuclease 7 small subunit">
    <location>
        <begin position="1"/>
        <end position="92"/>
    </location>
</feature>
<feature type="region of interest" description="Disordered" evidence="2">
    <location>
        <begin position="1"/>
        <end position="22"/>
    </location>
</feature>
<feature type="compositionally biased region" description="Polar residues" evidence="2">
    <location>
        <begin position="7"/>
        <end position="16"/>
    </location>
</feature>
<evidence type="ECO:0000255" key="1">
    <source>
        <dbReference type="HAMAP-Rule" id="MF_00337"/>
    </source>
</evidence>
<evidence type="ECO:0000256" key="2">
    <source>
        <dbReference type="SAM" id="MobiDB-lite"/>
    </source>
</evidence>
<proteinExistence type="inferred from homology"/>
<keyword id="KW-0963">Cytoplasm</keyword>
<keyword id="KW-0269">Exonuclease</keyword>
<keyword id="KW-0378">Hydrolase</keyword>
<keyword id="KW-0540">Nuclease</keyword>
<keyword id="KW-1185">Reference proteome</keyword>
<dbReference type="EC" id="3.1.11.6" evidence="1"/>
<dbReference type="EMBL" id="BX571872">
    <property type="protein sequence ID" value="CAE16257.1"/>
    <property type="molecule type" value="Genomic_DNA"/>
</dbReference>
<dbReference type="RefSeq" id="WP_011148023.1">
    <property type="nucleotide sequence ID" value="NC_005126.1"/>
</dbReference>
<dbReference type="SMR" id="Q7N0J8"/>
<dbReference type="STRING" id="243265.plu3885"/>
<dbReference type="GeneID" id="48850116"/>
<dbReference type="KEGG" id="plu:plu3885"/>
<dbReference type="eggNOG" id="COG1722">
    <property type="taxonomic scope" value="Bacteria"/>
</dbReference>
<dbReference type="HOGENOM" id="CLU_145918_3_3_6"/>
<dbReference type="OrthoDB" id="5591562at2"/>
<dbReference type="Proteomes" id="UP000002514">
    <property type="component" value="Chromosome"/>
</dbReference>
<dbReference type="GO" id="GO:0005829">
    <property type="term" value="C:cytosol"/>
    <property type="evidence" value="ECO:0007669"/>
    <property type="project" value="TreeGrafter"/>
</dbReference>
<dbReference type="GO" id="GO:0009318">
    <property type="term" value="C:exodeoxyribonuclease VII complex"/>
    <property type="evidence" value="ECO:0007669"/>
    <property type="project" value="InterPro"/>
</dbReference>
<dbReference type="GO" id="GO:0008855">
    <property type="term" value="F:exodeoxyribonuclease VII activity"/>
    <property type="evidence" value="ECO:0007669"/>
    <property type="project" value="UniProtKB-UniRule"/>
</dbReference>
<dbReference type="GO" id="GO:0006308">
    <property type="term" value="P:DNA catabolic process"/>
    <property type="evidence" value="ECO:0007669"/>
    <property type="project" value="UniProtKB-UniRule"/>
</dbReference>
<dbReference type="FunFam" id="1.10.287.1040:FF:000001">
    <property type="entry name" value="Exodeoxyribonuclease 7 small subunit"/>
    <property type="match status" value="1"/>
</dbReference>
<dbReference type="Gene3D" id="1.10.287.1040">
    <property type="entry name" value="Exonuclease VII, small subunit"/>
    <property type="match status" value="1"/>
</dbReference>
<dbReference type="HAMAP" id="MF_00337">
    <property type="entry name" value="Exonuc_7_S"/>
    <property type="match status" value="1"/>
</dbReference>
<dbReference type="InterPro" id="IPR003761">
    <property type="entry name" value="Exonuc_VII_S"/>
</dbReference>
<dbReference type="InterPro" id="IPR037004">
    <property type="entry name" value="Exonuc_VII_ssu_sf"/>
</dbReference>
<dbReference type="NCBIfam" id="NF002137">
    <property type="entry name" value="PRK00977.1-1"/>
    <property type="match status" value="1"/>
</dbReference>
<dbReference type="NCBIfam" id="NF002140">
    <property type="entry name" value="PRK00977.1-4"/>
    <property type="match status" value="1"/>
</dbReference>
<dbReference type="NCBIfam" id="TIGR01280">
    <property type="entry name" value="xseB"/>
    <property type="match status" value="1"/>
</dbReference>
<dbReference type="PANTHER" id="PTHR34137">
    <property type="entry name" value="EXODEOXYRIBONUCLEASE 7 SMALL SUBUNIT"/>
    <property type="match status" value="1"/>
</dbReference>
<dbReference type="PANTHER" id="PTHR34137:SF1">
    <property type="entry name" value="EXODEOXYRIBONUCLEASE 7 SMALL SUBUNIT"/>
    <property type="match status" value="1"/>
</dbReference>
<dbReference type="Pfam" id="PF02609">
    <property type="entry name" value="Exonuc_VII_S"/>
    <property type="match status" value="1"/>
</dbReference>
<dbReference type="SUPFAM" id="SSF116842">
    <property type="entry name" value="XseB-like"/>
    <property type="match status" value="1"/>
</dbReference>
<name>EX7S_PHOLL</name>